<gene>
    <name evidence="6" type="primary">PE9</name>
    <name evidence="6" type="ordered locus">Rv1088</name>
</gene>
<dbReference type="EMBL" id="AL123456">
    <property type="protein sequence ID" value="CCP43840.1"/>
    <property type="molecule type" value="Genomic_DNA"/>
</dbReference>
<dbReference type="RefSeq" id="WP_003900271.1">
    <property type="nucleotide sequence ID" value="NC_000962.3"/>
</dbReference>
<dbReference type="RefSeq" id="YP_177784.1">
    <property type="nucleotide sequence ID" value="NC_000962.3"/>
</dbReference>
<dbReference type="SMR" id="Q79FS8"/>
<dbReference type="STRING" id="83332.Rv1088"/>
<dbReference type="PaxDb" id="83332-Rv1088"/>
<dbReference type="DNASU" id="887096"/>
<dbReference type="GeneID" id="887096"/>
<dbReference type="KEGG" id="mtu:Rv1088"/>
<dbReference type="KEGG" id="mtv:RVBD_1088"/>
<dbReference type="PATRIC" id="fig|83332.115.peg.1215"/>
<dbReference type="TubercuList" id="Rv1088"/>
<dbReference type="eggNOG" id="COG0657">
    <property type="taxonomic scope" value="Bacteria"/>
</dbReference>
<dbReference type="InParanoid" id="Q79FS8"/>
<dbReference type="OrthoDB" id="4753307at2"/>
<dbReference type="Proteomes" id="UP000001584">
    <property type="component" value="Chromosome"/>
</dbReference>
<dbReference type="GO" id="GO:0009986">
    <property type="term" value="C:cell surface"/>
    <property type="evidence" value="ECO:0007669"/>
    <property type="project" value="UniProtKB-SubCell"/>
</dbReference>
<dbReference type="GO" id="GO:0005576">
    <property type="term" value="C:extracellular region"/>
    <property type="evidence" value="ECO:0007669"/>
    <property type="project" value="UniProtKB-KW"/>
</dbReference>
<dbReference type="GO" id="GO:0005886">
    <property type="term" value="C:plasma membrane"/>
    <property type="evidence" value="ECO:0007005"/>
    <property type="project" value="MTBBASE"/>
</dbReference>
<dbReference type="Gene3D" id="1.10.287.850">
    <property type="entry name" value="HP0062-like domain"/>
    <property type="match status" value="1"/>
</dbReference>
<dbReference type="InterPro" id="IPR000084">
    <property type="entry name" value="PE-PGRS_N"/>
</dbReference>
<dbReference type="Pfam" id="PF00934">
    <property type="entry name" value="PE"/>
    <property type="match status" value="1"/>
</dbReference>
<dbReference type="SUPFAM" id="SSF140459">
    <property type="entry name" value="PE/PPE dimer-like"/>
    <property type="match status" value="1"/>
</dbReference>
<reference key="1">
    <citation type="journal article" date="1998" name="Nature">
        <title>Deciphering the biology of Mycobacterium tuberculosis from the complete genome sequence.</title>
        <authorList>
            <person name="Cole S.T."/>
            <person name="Brosch R."/>
            <person name="Parkhill J."/>
            <person name="Garnier T."/>
            <person name="Churcher C.M."/>
            <person name="Harris D.E."/>
            <person name="Gordon S.V."/>
            <person name="Eiglmeier K."/>
            <person name="Gas S."/>
            <person name="Barry C.E. III"/>
            <person name="Tekaia F."/>
            <person name="Badcock K."/>
            <person name="Basham D."/>
            <person name="Brown D."/>
            <person name="Chillingworth T."/>
            <person name="Connor R."/>
            <person name="Davies R.M."/>
            <person name="Devlin K."/>
            <person name="Feltwell T."/>
            <person name="Gentles S."/>
            <person name="Hamlin N."/>
            <person name="Holroyd S."/>
            <person name="Hornsby T."/>
            <person name="Jagels K."/>
            <person name="Krogh A."/>
            <person name="McLean J."/>
            <person name="Moule S."/>
            <person name="Murphy L.D."/>
            <person name="Oliver S."/>
            <person name="Osborne J."/>
            <person name="Quail M.A."/>
            <person name="Rajandream M.A."/>
            <person name="Rogers J."/>
            <person name="Rutter S."/>
            <person name="Seeger K."/>
            <person name="Skelton S."/>
            <person name="Squares S."/>
            <person name="Squares R."/>
            <person name="Sulston J.E."/>
            <person name="Taylor K."/>
            <person name="Whitehead S."/>
            <person name="Barrell B.G."/>
        </authorList>
    </citation>
    <scope>NUCLEOTIDE SEQUENCE [LARGE SCALE GENOMIC DNA]</scope>
    <source>
        <strain>ATCC 25618 / H37Rv</strain>
    </source>
</reference>
<reference key="2">
    <citation type="journal article" date="2015" name="Cell. Microbiol.">
        <title>The Mycobacterium tuberculosis protein pair PE9 (Rv1088)-PE10 (Rv1089) forms heterodimers and induces macrophage apoptosis through Toll-like receptor 4.</title>
        <authorList>
            <person name="Tiwari B."/>
            <person name="Ramakrishnan U.M."/>
            <person name="Raghunand T.R."/>
        </authorList>
    </citation>
    <scope>FUNCTION</scope>
    <scope>INTERACTION WITH PE10 AND TLR4</scope>
    <scope>SUBCELLULAR LOCATION</scope>
</reference>
<reference key="3">
    <citation type="journal article" date="2016" name="Int. J. Biol. Macromol.">
        <title>Mycobacterium tuberculosis PE9 protein has high activity binding peptides which inhibit target cell invasion.</title>
        <authorList>
            <person name="Diaz D.P."/>
            <person name="Ocampo M."/>
            <person name="Pabon L."/>
            <person name="Herrera C."/>
            <person name="Patarroyo M.A."/>
            <person name="Munoz M."/>
            <person name="Patarroyo M.E."/>
        </authorList>
    </citation>
    <scope>SUBCELLULAR LOCATION</scope>
</reference>
<organism>
    <name type="scientific">Mycobacterium tuberculosis (strain ATCC 25618 / H37Rv)</name>
    <dbReference type="NCBI Taxonomy" id="83332"/>
    <lineage>
        <taxon>Bacteria</taxon>
        <taxon>Bacillati</taxon>
        <taxon>Actinomycetota</taxon>
        <taxon>Actinomycetes</taxon>
        <taxon>Mycobacteriales</taxon>
        <taxon>Mycobacteriaceae</taxon>
        <taxon>Mycobacterium</taxon>
        <taxon>Mycobacterium tuberculosis complex</taxon>
    </lineage>
</organism>
<feature type="chain" id="PRO_0000438135" description="PE family protein PE9">
    <location>
        <begin position="1"/>
        <end position="144"/>
    </location>
</feature>
<feature type="domain" description="PE" evidence="1">
    <location>
        <begin position="1"/>
        <end position="87"/>
    </location>
</feature>
<feature type="region of interest" description="Disordered" evidence="2">
    <location>
        <begin position="98"/>
        <end position="124"/>
    </location>
</feature>
<keyword id="KW-0134">Cell wall</keyword>
<keyword id="KW-1185">Reference proteome</keyword>
<keyword id="KW-0964">Secreted</keyword>
<keyword id="KW-0843">Virulence</keyword>
<name>PE09_MYCTU</name>
<comment type="function">
    <text evidence="3">Together with PE10, induces macrophage apoptosis through human Toll-like receptor 4 (TLR4) signaling pathway. Interaction with TLR4 leads to increased levels of phospho-IRF-3, increase in the transcript levels of IFN-beta and pro-apoptotic genes, up-regulation of IL-10, down-regulation of IL-1b and enhanced levels of macrophage apoptosis.</text>
</comment>
<comment type="subunit">
    <text evidence="3">Forms a complex with PE10. The complex interacts with human TLR4.</text>
</comment>
<comment type="subcellular location">
    <subcellularLocation>
        <location evidence="3">Secreted</location>
        <location evidence="3">Cell wall</location>
    </subcellularLocation>
    <subcellularLocation>
        <location evidence="4">Cell surface</location>
    </subcellularLocation>
</comment>
<comment type="similarity">
    <text evidence="5">Belongs to the mycobacterial PE family.</text>
</comment>
<sequence length="144" mass="15376">MSYMIATPAALTAAATDIDGIGSAVSVANAAAVAATTGVLAAGGDEVLAAIARLFNANAEEYHALSAQVAAFQTLFVRTLTGGCGVFRRRRGRQCVTAAEHRAAGAGRRQRRRRSGDGQWRLRQQRHFGCGGQPEFRQHSEHRR</sequence>
<accession>Q79FS8</accession>
<accession>F2GGV1</accession>
<accession>I6Y9L0</accession>
<accession>L0T5N7</accession>
<protein>
    <recommendedName>
        <fullName evidence="5">PE family protein PE9</fullName>
    </recommendedName>
</protein>
<evidence type="ECO:0000255" key="1"/>
<evidence type="ECO:0000256" key="2">
    <source>
        <dbReference type="SAM" id="MobiDB-lite"/>
    </source>
</evidence>
<evidence type="ECO:0000269" key="3">
    <source>
    </source>
</evidence>
<evidence type="ECO:0000269" key="4">
    <source>
    </source>
</evidence>
<evidence type="ECO:0000305" key="5"/>
<evidence type="ECO:0000312" key="6">
    <source>
        <dbReference type="EMBL" id="CCP43840.1"/>
    </source>
</evidence>
<proteinExistence type="evidence at protein level"/>